<dbReference type="PIR" id="S30348">
    <property type="entry name" value="S30348"/>
</dbReference>
<dbReference type="GO" id="GO:0005576">
    <property type="term" value="C:extracellular region"/>
    <property type="evidence" value="ECO:0007669"/>
    <property type="project" value="UniProtKB-SubCell"/>
</dbReference>
<dbReference type="GO" id="GO:0008289">
    <property type="term" value="F:lipid binding"/>
    <property type="evidence" value="ECO:0007669"/>
    <property type="project" value="UniProtKB-KW"/>
</dbReference>
<dbReference type="GO" id="GO:0042381">
    <property type="term" value="P:hemolymph coagulation"/>
    <property type="evidence" value="ECO:0007669"/>
    <property type="project" value="UniProtKB-KW"/>
</dbReference>
<reference key="1">
    <citation type="journal article" date="1995" name="Biochem. Biophys. Res. Commun.">
        <title>Identification of the major lipoproteins in crayfish hemolymph as proteins involved in immune recognition and clotting.</title>
        <authorList>
            <person name="Hall M."/>
            <person name="van Heusden M.C."/>
            <person name="Soederhaell K."/>
        </authorList>
    </citation>
    <scope>PROTEIN SEQUENCE</scope>
</reference>
<reference key="2">
    <citation type="journal article" date="1993" name="Eur. J. Biochem.">
        <title>Characterization of a clotting protein, isolated from plasma of the freshwater crayfish Pacifastacus leniusculus.</title>
        <authorList>
            <person name="Kopacek P."/>
            <person name="Hall M."/>
            <person name="Soederhaell K."/>
        </authorList>
    </citation>
    <scope>PROTEIN SEQUENCE OF 1-10</scope>
</reference>
<sequence length="20" mass="2311">LHSNLEYQYRYSGRVASGIP</sequence>
<protein>
    <recommendedName>
        <fullName>Fibrinogen</fullName>
    </recommendedName>
    <alternativeName>
        <fullName>VHDL</fullName>
    </alternativeName>
</protein>
<accession>P81070</accession>
<comment type="function">
    <text>Involved in lipid transport. Plays a role in hemolymph clotting. May be involved in wound healing in the cuticle.</text>
</comment>
<comment type="subcellular location">
    <subcellularLocation>
        <location>Secreted</location>
        <location>Extracellular space</location>
    </subcellularLocation>
</comment>
<comment type="tissue specificity">
    <text>Secreted into the hemolymph.</text>
</comment>
<name>FIBR_PACLE</name>
<feature type="chain" id="PRO_0000134401" description="Fibrinogen">
    <location>
        <begin position="1"/>
        <end position="20" status="greater than"/>
    </location>
</feature>
<feature type="domain" description="Vitellogenin" evidence="1">
    <location>
        <begin position="1"/>
        <end position="20" status="greater than"/>
    </location>
</feature>
<feature type="non-terminal residue">
    <location>
        <position position="20"/>
    </location>
</feature>
<proteinExistence type="evidence at protein level"/>
<keyword id="KW-0903">Direct protein sequencing</keyword>
<keyword id="KW-0353">Hemolymph clotting</keyword>
<keyword id="KW-0446">Lipid-binding</keyword>
<keyword id="KW-0964">Secreted</keyword>
<evidence type="ECO:0000255" key="1">
    <source>
        <dbReference type="PROSITE-ProRule" id="PRU00557"/>
    </source>
</evidence>
<organism>
    <name type="scientific">Pacifastacus leniusculus</name>
    <name type="common">Signal crayfish</name>
    <dbReference type="NCBI Taxonomy" id="6720"/>
    <lineage>
        <taxon>Eukaryota</taxon>
        <taxon>Metazoa</taxon>
        <taxon>Ecdysozoa</taxon>
        <taxon>Arthropoda</taxon>
        <taxon>Crustacea</taxon>
        <taxon>Multicrustacea</taxon>
        <taxon>Malacostraca</taxon>
        <taxon>Eumalacostraca</taxon>
        <taxon>Eucarida</taxon>
        <taxon>Decapoda</taxon>
        <taxon>Pleocyemata</taxon>
        <taxon>Astacidea</taxon>
        <taxon>Astacoidea</taxon>
        <taxon>Astacidae</taxon>
        <taxon>Pacifastacus</taxon>
    </lineage>
</organism>